<evidence type="ECO:0000250" key="1"/>
<evidence type="ECO:0000255" key="2"/>
<evidence type="ECO:0000256" key="3">
    <source>
        <dbReference type="SAM" id="MobiDB-lite"/>
    </source>
</evidence>
<evidence type="ECO:0000305" key="4"/>
<dbReference type="EMBL" id="GG692398">
    <property type="protein sequence ID" value="EER32712.1"/>
    <property type="molecule type" value="Genomic_DNA"/>
</dbReference>
<dbReference type="RefSeq" id="XP_002548840.1">
    <property type="nucleotide sequence ID" value="XM_002548794.1"/>
</dbReference>
<dbReference type="SMR" id="C5MAP5"/>
<dbReference type="STRING" id="294747.C5MAP5"/>
<dbReference type="EnsemblFungi" id="CTRG_03137-t43_1">
    <property type="protein sequence ID" value="CTRG_03137-t43_1-p1"/>
    <property type="gene ID" value="CTRG_03137"/>
</dbReference>
<dbReference type="GeneID" id="8299765"/>
<dbReference type="KEGG" id="ctp:CTRG_03137"/>
<dbReference type="VEuPathDB" id="FungiDB:CTRG_03137"/>
<dbReference type="eggNOG" id="KOG3190">
    <property type="taxonomic scope" value="Eukaryota"/>
</dbReference>
<dbReference type="HOGENOM" id="CLU_048802_3_0_1"/>
<dbReference type="OrthoDB" id="448446at2759"/>
<dbReference type="Proteomes" id="UP000002037">
    <property type="component" value="Unassembled WGS sequence"/>
</dbReference>
<dbReference type="GO" id="GO:0030686">
    <property type="term" value="C:90S preribosome"/>
    <property type="evidence" value="ECO:0007669"/>
    <property type="project" value="EnsemblFungi"/>
</dbReference>
<dbReference type="GO" id="GO:0005730">
    <property type="term" value="C:nucleolus"/>
    <property type="evidence" value="ECO:0007669"/>
    <property type="project" value="UniProtKB-SubCell"/>
</dbReference>
<dbReference type="GO" id="GO:0032040">
    <property type="term" value="C:small-subunit processome"/>
    <property type="evidence" value="ECO:0007669"/>
    <property type="project" value="EnsemblFungi"/>
</dbReference>
<dbReference type="GO" id="GO:0000462">
    <property type="term" value="P:maturation of SSU-rRNA from tricistronic rRNA transcript (SSU-rRNA, 5.8S rRNA, LSU-rRNA)"/>
    <property type="evidence" value="ECO:0007669"/>
    <property type="project" value="EnsemblFungi"/>
</dbReference>
<dbReference type="InterPro" id="IPR009292">
    <property type="entry name" value="RRP36"/>
</dbReference>
<dbReference type="PANTHER" id="PTHR21738">
    <property type="entry name" value="RIBOSOMAL RNA PROCESSING PROTEIN 36 HOMOLOG"/>
    <property type="match status" value="1"/>
</dbReference>
<dbReference type="PANTHER" id="PTHR21738:SF0">
    <property type="entry name" value="RIBOSOMAL RNA PROCESSING PROTEIN 36 HOMOLOG"/>
    <property type="match status" value="1"/>
</dbReference>
<dbReference type="Pfam" id="PF06102">
    <property type="entry name" value="RRP36"/>
    <property type="match status" value="1"/>
</dbReference>
<gene>
    <name type="primary">RRP36</name>
    <name type="ORF">CTRG_03137</name>
</gene>
<proteinExistence type="inferred from homology"/>
<comment type="function">
    <text evidence="1">Component of the 90S pre-ribosome involved in the maturation of rRNAs. Required for early cleavages of the pre-RNAs in the 40S ribosomal subunit maturation pathway (By similarity).</text>
</comment>
<comment type="subunit">
    <text evidence="1">Associates with 90S and pre-40S pre-ribosomal particles.</text>
</comment>
<comment type="subcellular location">
    <subcellularLocation>
        <location evidence="1">Nucleus</location>
        <location evidence="1">Nucleolus</location>
    </subcellularLocation>
</comment>
<comment type="similarity">
    <text evidence="4">Belongs to the RRP36 family.</text>
</comment>
<name>RRP36_CANTT</name>
<protein>
    <recommendedName>
        <fullName>rRNA biogenesis protein RRP36</fullName>
    </recommendedName>
    <alternativeName>
        <fullName>Ribosomal RNA-processing protein 36</fullName>
    </alternativeName>
</protein>
<accession>C5MAP5</accession>
<reference key="1">
    <citation type="journal article" date="2009" name="Nature">
        <title>Evolution of pathogenicity and sexual reproduction in eight Candida genomes.</title>
        <authorList>
            <person name="Butler G."/>
            <person name="Rasmussen M.D."/>
            <person name="Lin M.F."/>
            <person name="Santos M.A.S."/>
            <person name="Sakthikumar S."/>
            <person name="Munro C.A."/>
            <person name="Rheinbay E."/>
            <person name="Grabherr M."/>
            <person name="Forche A."/>
            <person name="Reedy J.L."/>
            <person name="Agrafioti I."/>
            <person name="Arnaud M.B."/>
            <person name="Bates S."/>
            <person name="Brown A.J.P."/>
            <person name="Brunke S."/>
            <person name="Costanzo M.C."/>
            <person name="Fitzpatrick D.A."/>
            <person name="de Groot P.W.J."/>
            <person name="Harris D."/>
            <person name="Hoyer L.L."/>
            <person name="Hube B."/>
            <person name="Klis F.M."/>
            <person name="Kodira C."/>
            <person name="Lennard N."/>
            <person name="Logue M.E."/>
            <person name="Martin R."/>
            <person name="Neiman A.M."/>
            <person name="Nikolaou E."/>
            <person name="Quail M.A."/>
            <person name="Quinn J."/>
            <person name="Santos M.C."/>
            <person name="Schmitzberger F.F."/>
            <person name="Sherlock G."/>
            <person name="Shah P."/>
            <person name="Silverstein K.A.T."/>
            <person name="Skrzypek M.S."/>
            <person name="Soll D."/>
            <person name="Staggs R."/>
            <person name="Stansfield I."/>
            <person name="Stumpf M.P.H."/>
            <person name="Sudbery P.E."/>
            <person name="Srikantha T."/>
            <person name="Zeng Q."/>
            <person name="Berman J."/>
            <person name="Berriman M."/>
            <person name="Heitman J."/>
            <person name="Gow N.A.R."/>
            <person name="Lorenz M.C."/>
            <person name="Birren B.W."/>
            <person name="Kellis M."/>
            <person name="Cuomo C.A."/>
        </authorList>
    </citation>
    <scope>NUCLEOTIDE SEQUENCE [LARGE SCALE GENOMIC DNA]</scope>
    <source>
        <strain>ATCC MYA-3404 / T1</strain>
    </source>
</reference>
<organism>
    <name type="scientific">Candida tropicalis (strain ATCC MYA-3404 / T1)</name>
    <name type="common">Yeast</name>
    <dbReference type="NCBI Taxonomy" id="294747"/>
    <lineage>
        <taxon>Eukaryota</taxon>
        <taxon>Fungi</taxon>
        <taxon>Dikarya</taxon>
        <taxon>Ascomycota</taxon>
        <taxon>Saccharomycotina</taxon>
        <taxon>Pichiomycetes</taxon>
        <taxon>Debaryomycetaceae</taxon>
        <taxon>Candida/Lodderomyces clade</taxon>
        <taxon>Candida</taxon>
    </lineage>
</organism>
<keyword id="KW-0175">Coiled coil</keyword>
<keyword id="KW-0539">Nucleus</keyword>
<keyword id="KW-1185">Reference proteome</keyword>
<keyword id="KW-0687">Ribonucleoprotein</keyword>
<keyword id="KW-0690">Ribosome biogenesis</keyword>
<keyword id="KW-0698">rRNA processing</keyword>
<feature type="chain" id="PRO_0000397626" description="rRNA biogenesis protein RRP36">
    <location>
        <begin position="1"/>
        <end position="326"/>
    </location>
</feature>
<feature type="region of interest" description="Disordered" evidence="3">
    <location>
        <begin position="51"/>
        <end position="178"/>
    </location>
</feature>
<feature type="region of interest" description="Disordered" evidence="3">
    <location>
        <begin position="288"/>
        <end position="326"/>
    </location>
</feature>
<feature type="coiled-coil region" evidence="2">
    <location>
        <begin position="207"/>
        <end position="250"/>
    </location>
</feature>
<feature type="compositionally biased region" description="Acidic residues" evidence="3">
    <location>
        <begin position="52"/>
        <end position="63"/>
    </location>
</feature>
<feature type="compositionally biased region" description="Acidic residues" evidence="3">
    <location>
        <begin position="103"/>
        <end position="129"/>
    </location>
</feature>
<feature type="compositionally biased region" description="Basic and acidic residues" evidence="3">
    <location>
        <begin position="290"/>
        <end position="304"/>
    </location>
</feature>
<sequence length="326" mass="38268">MLAIMVRFYQSQSEKSAHNTKKIYSDNHQLLISFINSKALQTMAKTIRPSYYDDDDISSEDDFTYSSKTNKKSRGDEEDDELSSISFGALNRAQAKLSKRDSDDDEEEEEEEESADDGFFEDSDSDGPPEESSSSNRHGNNDKKKKNKHAPSESSSKRPVSRIRDIPGLPSRREQTLHTDIRFDAAYGKADLRKIRKDYAFLDDYRKQEISNMEGILRDKKNRLNDDEREEIKLQLQSLKSRMDTLKNRDLEESILKNYKKQQMDDFKSGKVNKPYFLKRSDKRKVLQKAKFDSMKPKQREKAMERKRKKRLGKEFKQLEFRPNNR</sequence>